<proteinExistence type="inferred from homology"/>
<sequence length="160" mass="18129">MTADVPNARLVDVELDESIGRSTPDVEHERAVAIFDLIEENSFHPVGDQKGGPYRLKLSLMESRLIFSITRENGDAVATHILSLTPLRRVVRDYFMICESYYQAIRSATPSKIEAIDMGRRGLHNEGSQTLQARLKGKIEVDFDTARRLFTLVCVLHWRG</sequence>
<comment type="similarity">
    <text evidence="1">Belongs to the UPF0262 family.</text>
</comment>
<accession>P67568</accession>
<accession>G0KBV0</accession>
<accession>Q8G2R3</accession>
<accession>Q8YF58</accession>
<reference key="1">
    <citation type="journal article" date="2002" name="Proc. Natl. Acad. Sci. U.S.A.">
        <title>The Brucella suis genome reveals fundamental similarities between animal and plant pathogens and symbionts.</title>
        <authorList>
            <person name="Paulsen I.T."/>
            <person name="Seshadri R."/>
            <person name="Nelson K.E."/>
            <person name="Eisen J.A."/>
            <person name="Heidelberg J.F."/>
            <person name="Read T.D."/>
            <person name="Dodson R.J."/>
            <person name="Umayam L.A."/>
            <person name="Brinkac L.M."/>
            <person name="Beanan M.J."/>
            <person name="Daugherty S.C."/>
            <person name="DeBoy R.T."/>
            <person name="Durkin A.S."/>
            <person name="Kolonay J.F."/>
            <person name="Madupu R."/>
            <person name="Nelson W.C."/>
            <person name="Ayodeji B."/>
            <person name="Kraul M."/>
            <person name="Shetty J."/>
            <person name="Malek J.A."/>
            <person name="Van Aken S.E."/>
            <person name="Riedmuller S."/>
            <person name="Tettelin H."/>
            <person name="Gill S.R."/>
            <person name="White O."/>
            <person name="Salzberg S.L."/>
            <person name="Hoover D.L."/>
            <person name="Lindler L.E."/>
            <person name="Halling S.M."/>
            <person name="Boyle S.M."/>
            <person name="Fraser C.M."/>
        </authorList>
    </citation>
    <scope>NUCLEOTIDE SEQUENCE [LARGE SCALE GENOMIC DNA]</scope>
    <source>
        <strain>1330</strain>
    </source>
</reference>
<reference key="2">
    <citation type="journal article" date="2011" name="J. Bacteriol.">
        <title>Revised genome sequence of Brucella suis 1330.</title>
        <authorList>
            <person name="Tae H."/>
            <person name="Shallom S."/>
            <person name="Settlage R."/>
            <person name="Preston D."/>
            <person name="Adams L.G."/>
            <person name="Garner H.R."/>
        </authorList>
    </citation>
    <scope>NUCLEOTIDE SEQUENCE [LARGE SCALE GENOMIC DNA]</scope>
    <source>
        <strain>1330</strain>
    </source>
</reference>
<name>Y251_BRUSU</name>
<organism>
    <name type="scientific">Brucella suis biovar 1 (strain 1330)</name>
    <dbReference type="NCBI Taxonomy" id="204722"/>
    <lineage>
        <taxon>Bacteria</taxon>
        <taxon>Pseudomonadati</taxon>
        <taxon>Pseudomonadota</taxon>
        <taxon>Alphaproteobacteria</taxon>
        <taxon>Hyphomicrobiales</taxon>
        <taxon>Brucellaceae</taxon>
        <taxon>Brucella/Ochrobactrum group</taxon>
        <taxon>Brucella</taxon>
    </lineage>
</organism>
<gene>
    <name type="ordered locus">BR0251</name>
    <name type="ordered locus">BS1330_I0252</name>
</gene>
<evidence type="ECO:0000255" key="1">
    <source>
        <dbReference type="HAMAP-Rule" id="MF_00678"/>
    </source>
</evidence>
<dbReference type="EMBL" id="AE014291">
    <property type="protein sequence ID" value="AAN29200.1"/>
    <property type="molecule type" value="Genomic_DNA"/>
</dbReference>
<dbReference type="EMBL" id="CP002997">
    <property type="protein sequence ID" value="AEM17613.1"/>
    <property type="molecule type" value="Genomic_DNA"/>
</dbReference>
<dbReference type="RefSeq" id="WP_002965533.1">
    <property type="nucleotide sequence ID" value="NZ_KN046804.1"/>
</dbReference>
<dbReference type="KEGG" id="bms:BR0251"/>
<dbReference type="KEGG" id="bsi:BS1330_I0252"/>
<dbReference type="PATRIC" id="fig|204722.21.peg.1040"/>
<dbReference type="HOGENOM" id="CLU_112904_0_0_5"/>
<dbReference type="PhylomeDB" id="P67568"/>
<dbReference type="Proteomes" id="UP000007104">
    <property type="component" value="Chromosome I"/>
</dbReference>
<dbReference type="HAMAP" id="MF_00678">
    <property type="entry name" value="UPF0262"/>
    <property type="match status" value="1"/>
</dbReference>
<dbReference type="InterPro" id="IPR008321">
    <property type="entry name" value="UCP032146"/>
</dbReference>
<dbReference type="NCBIfam" id="NF002769">
    <property type="entry name" value="PRK02853.1"/>
    <property type="match status" value="1"/>
</dbReference>
<dbReference type="Pfam" id="PF06793">
    <property type="entry name" value="UPF0262"/>
    <property type="match status" value="1"/>
</dbReference>
<dbReference type="PIRSF" id="PIRSF032146">
    <property type="entry name" value="UCP032146"/>
    <property type="match status" value="1"/>
</dbReference>
<feature type="chain" id="PRO_0000220329" description="UPF0262 protein BR0251/BS1330_I0252">
    <location>
        <begin position="1"/>
        <end position="160"/>
    </location>
</feature>
<protein>
    <recommendedName>
        <fullName evidence="1">UPF0262 protein BR0251/BS1330_I0252</fullName>
    </recommendedName>
</protein>